<feature type="chain" id="PRO_0000453706" description="Preterpestacin I synthase tpcA">
    <location>
        <begin position="1"/>
        <end position="704"/>
    </location>
</feature>
<feature type="region of interest" description="Terpene cyclase" evidence="2">
    <location>
        <begin position="1"/>
        <end position="329"/>
    </location>
</feature>
<feature type="region of interest" description="Prenyltransferase" evidence="2">
    <location>
        <begin position="330"/>
        <end position="688"/>
    </location>
</feature>
<feature type="region of interest" description="Disordered" evidence="6">
    <location>
        <begin position="361"/>
        <end position="380"/>
    </location>
</feature>
<feature type="short sequence motif" description="DDXXD 1" evidence="2">
    <location>
        <begin position="96"/>
        <end position="100"/>
    </location>
</feature>
<feature type="short sequence motif" description="NSE/DTE" evidence="2">
    <location>
        <begin position="231"/>
        <end position="239"/>
    </location>
</feature>
<feature type="short sequence motif" description="DDXXD 2" evidence="2">
    <location>
        <begin position="445"/>
        <end position="449"/>
    </location>
</feature>
<feature type="binding site" evidence="5">
    <location>
        <position position="96"/>
    </location>
    <ligand>
        <name>Mg(2+)</name>
        <dbReference type="ChEBI" id="CHEBI:18420"/>
        <label>1</label>
    </ligand>
</feature>
<feature type="binding site" evidence="5">
    <location>
        <position position="96"/>
    </location>
    <ligand>
        <name>Mg(2+)</name>
        <dbReference type="ChEBI" id="CHEBI:18420"/>
        <label>2</label>
    </ligand>
</feature>
<feature type="binding site" evidence="1">
    <location>
        <position position="96"/>
    </location>
    <ligand>
        <name>substrate</name>
    </ligand>
</feature>
<feature type="binding site" evidence="1">
    <location>
        <position position="231"/>
    </location>
    <ligand>
        <name>substrate</name>
    </ligand>
</feature>
<feature type="binding site" evidence="1">
    <location>
        <begin position="235"/>
        <end position="239"/>
    </location>
    <ligand>
        <name>substrate</name>
    </ligand>
</feature>
<feature type="binding site" evidence="1">
    <location>
        <begin position="325"/>
        <end position="326"/>
    </location>
    <ligand>
        <name>substrate</name>
    </ligand>
</feature>
<feature type="binding site" evidence="4">
    <location>
        <position position="406"/>
    </location>
    <ligand>
        <name>isopentenyl diphosphate</name>
        <dbReference type="ChEBI" id="CHEBI:128769"/>
    </ligand>
</feature>
<feature type="binding site" evidence="4">
    <location>
        <position position="409"/>
    </location>
    <ligand>
        <name>isopentenyl diphosphate</name>
        <dbReference type="ChEBI" id="CHEBI:128769"/>
    </ligand>
</feature>
<feature type="binding site" evidence="4">
    <location>
        <position position="438"/>
    </location>
    <ligand>
        <name>isopentenyl diphosphate</name>
        <dbReference type="ChEBI" id="CHEBI:128769"/>
    </ligand>
</feature>
<feature type="binding site" evidence="4">
    <location>
        <position position="445"/>
    </location>
    <ligand>
        <name>Mg(2+)</name>
        <dbReference type="ChEBI" id="CHEBI:18420"/>
        <label>3</label>
    </ligand>
</feature>
<feature type="binding site" evidence="4">
    <location>
        <position position="445"/>
    </location>
    <ligand>
        <name>Mg(2+)</name>
        <dbReference type="ChEBI" id="CHEBI:18420"/>
        <label>4</label>
    </ligand>
</feature>
<feature type="binding site" evidence="4">
    <location>
        <position position="449"/>
    </location>
    <ligand>
        <name>Mg(2+)</name>
        <dbReference type="ChEBI" id="CHEBI:18420"/>
        <label>3</label>
    </ligand>
</feature>
<feature type="binding site" evidence="4">
    <location>
        <position position="449"/>
    </location>
    <ligand>
        <name>Mg(2+)</name>
        <dbReference type="ChEBI" id="CHEBI:18420"/>
        <label>4</label>
    </ligand>
</feature>
<feature type="binding site" evidence="4">
    <location>
        <position position="454"/>
    </location>
    <ligand>
        <name>dimethylallyl diphosphate</name>
        <dbReference type="ChEBI" id="CHEBI:57623"/>
    </ligand>
</feature>
<feature type="binding site" evidence="4">
    <location>
        <position position="455"/>
    </location>
    <ligand>
        <name>isopentenyl diphosphate</name>
        <dbReference type="ChEBI" id="CHEBI:128769"/>
    </ligand>
</feature>
<feature type="binding site" evidence="4">
    <location>
        <position position="532"/>
    </location>
    <ligand>
        <name>dimethylallyl diphosphate</name>
        <dbReference type="ChEBI" id="CHEBI:57623"/>
    </ligand>
</feature>
<feature type="binding site" evidence="4">
    <location>
        <position position="533"/>
    </location>
    <ligand>
        <name>dimethylallyl diphosphate</name>
        <dbReference type="ChEBI" id="CHEBI:57623"/>
    </ligand>
</feature>
<feature type="binding site" evidence="4">
    <location>
        <position position="568"/>
    </location>
    <ligand>
        <name>dimethylallyl diphosphate</name>
        <dbReference type="ChEBI" id="CHEBI:57623"/>
    </ligand>
</feature>
<feature type="binding site" evidence="4">
    <location>
        <position position="575"/>
    </location>
    <ligand>
        <name>dimethylallyl diphosphate</name>
        <dbReference type="ChEBI" id="CHEBI:57623"/>
    </ligand>
</feature>
<feature type="binding site" evidence="4">
    <location>
        <position position="583"/>
    </location>
    <ligand>
        <name>dimethylallyl diphosphate</name>
        <dbReference type="ChEBI" id="CHEBI:57623"/>
    </ligand>
</feature>
<feature type="binding site" evidence="4">
    <location>
        <position position="593"/>
    </location>
    <ligand>
        <name>dimethylallyl diphosphate</name>
        <dbReference type="ChEBI" id="CHEBI:57623"/>
    </ligand>
</feature>
<protein>
    <recommendedName>
        <fullName evidence="9">Preterpestacin I synthase tpcA</fullName>
    </recommendedName>
    <alternativeName>
        <fullName evidence="9">Aspergilol biosynthesis cluster protein tpcA</fullName>
    </alternativeName>
    <alternativeName>
        <fullName evidence="9">Bifunctional terpene synthase tpcA</fullName>
        <shortName evidence="9">BFTS tpcA</shortName>
        <shortName evidence="9">TS tpcA</shortName>
    </alternativeName>
    <domain>
        <recommendedName>
            <fullName evidence="9">Terpene cyclase</fullName>
            <ecNumber evidence="7">4.2.3.-</ecNumber>
        </recommendedName>
    </domain>
    <domain>
        <recommendedName>
            <fullName evidence="9">Geranylgeranyl diphosphate synthase</fullName>
            <shortName evidence="9">GGDP synthase</shortName>
            <shortName evidence="9">GGS</shortName>
            <ecNumber evidence="7">2.5.1.29</ecNumber>
        </recommendedName>
    </domain>
    <domain>
        <recommendedName>
            <fullName evidence="9">Geranylfarnesyl diphosphate synthase</fullName>
            <shortName evidence="9">GFDP synthase</shortName>
            <ecNumber evidence="7">2.5.1.81</ecNumber>
        </recommendedName>
    </domain>
</protein>
<dbReference type="EC" id="4.2.3.-" evidence="7"/>
<dbReference type="EC" id="2.5.1.29" evidence="7"/>
<dbReference type="EC" id="2.5.1.81" evidence="7"/>
<dbReference type="EMBL" id="KB445573">
    <property type="protein sequence ID" value="EMD93704.1"/>
    <property type="molecule type" value="Genomic_DNA"/>
</dbReference>
<dbReference type="SMR" id="M2U578"/>
<dbReference type="STRING" id="701091.M2U578"/>
<dbReference type="eggNOG" id="KOG0777">
    <property type="taxonomic scope" value="Eukaryota"/>
</dbReference>
<dbReference type="HOGENOM" id="CLU_014015_10_0_1"/>
<dbReference type="OMA" id="FSWEREY"/>
<dbReference type="OrthoDB" id="15148at28556"/>
<dbReference type="UniPathway" id="UPA00213"/>
<dbReference type="Proteomes" id="UP000016936">
    <property type="component" value="Unassembled WGS sequence"/>
</dbReference>
<dbReference type="GO" id="GO:0016829">
    <property type="term" value="F:lyase activity"/>
    <property type="evidence" value="ECO:0007669"/>
    <property type="project" value="UniProtKB-KW"/>
</dbReference>
<dbReference type="GO" id="GO:0046872">
    <property type="term" value="F:metal ion binding"/>
    <property type="evidence" value="ECO:0007669"/>
    <property type="project" value="UniProtKB-KW"/>
</dbReference>
<dbReference type="GO" id="GO:0004659">
    <property type="term" value="F:prenyltransferase activity"/>
    <property type="evidence" value="ECO:0007669"/>
    <property type="project" value="InterPro"/>
</dbReference>
<dbReference type="GO" id="GO:0046165">
    <property type="term" value="P:alcohol biosynthetic process"/>
    <property type="evidence" value="ECO:0007669"/>
    <property type="project" value="UniProtKB-ARBA"/>
</dbReference>
<dbReference type="GO" id="GO:0043386">
    <property type="term" value="P:mycotoxin biosynthetic process"/>
    <property type="evidence" value="ECO:0007669"/>
    <property type="project" value="UniProtKB-ARBA"/>
</dbReference>
<dbReference type="GO" id="GO:0016114">
    <property type="term" value="P:terpenoid biosynthetic process"/>
    <property type="evidence" value="ECO:0007669"/>
    <property type="project" value="UniProtKB-UniPathway"/>
</dbReference>
<dbReference type="Gene3D" id="1.10.600.10">
    <property type="entry name" value="Farnesyl Diphosphate Synthase"/>
    <property type="match status" value="2"/>
</dbReference>
<dbReference type="InterPro" id="IPR008949">
    <property type="entry name" value="Isoprenoid_synthase_dom_sf"/>
</dbReference>
<dbReference type="InterPro" id="IPR000092">
    <property type="entry name" value="Polyprenyl_synt"/>
</dbReference>
<dbReference type="InterPro" id="IPR033749">
    <property type="entry name" value="Polyprenyl_synt_CS"/>
</dbReference>
<dbReference type="PANTHER" id="PTHR12001">
    <property type="entry name" value="GERANYLGERANYL PYROPHOSPHATE SYNTHASE"/>
    <property type="match status" value="1"/>
</dbReference>
<dbReference type="PANTHER" id="PTHR12001:SF72">
    <property type="entry name" value="THIJ_PFPI FAMILY PROTEIN (AFU_ORTHOLOGUE AFUA_3G01210)-RELATED"/>
    <property type="match status" value="1"/>
</dbReference>
<dbReference type="Pfam" id="PF00348">
    <property type="entry name" value="polyprenyl_synt"/>
    <property type="match status" value="1"/>
</dbReference>
<dbReference type="Pfam" id="PF19086">
    <property type="entry name" value="Terpene_syn_C_2"/>
    <property type="match status" value="1"/>
</dbReference>
<dbReference type="SFLD" id="SFLDS00005">
    <property type="entry name" value="Isoprenoid_Synthase_Type_I"/>
    <property type="match status" value="1"/>
</dbReference>
<dbReference type="SUPFAM" id="SSF48576">
    <property type="entry name" value="Terpenoid synthases"/>
    <property type="match status" value="2"/>
</dbReference>
<dbReference type="PROSITE" id="PS00723">
    <property type="entry name" value="POLYPRENYL_SYNTHASE_1"/>
    <property type="match status" value="1"/>
</dbReference>
<dbReference type="PROSITE" id="PS00444">
    <property type="entry name" value="POLYPRENYL_SYNTHASE_2"/>
    <property type="match status" value="1"/>
</dbReference>
<reference key="1">
    <citation type="journal article" date="2012" name="PLoS Pathog.">
        <title>Diverse lifestyles and strategies of plant pathogenesis encoded in the genomes of eighteen Dothideomycetes fungi.</title>
        <authorList>
            <person name="Ohm R.A."/>
            <person name="Feau N."/>
            <person name="Henrissat B."/>
            <person name="Schoch C.L."/>
            <person name="Horwitz B.A."/>
            <person name="Barry K.W."/>
            <person name="Condon B.J."/>
            <person name="Copeland A.C."/>
            <person name="Dhillon B."/>
            <person name="Glaser F."/>
            <person name="Hesse C.N."/>
            <person name="Kosti I."/>
            <person name="LaButti K."/>
            <person name="Lindquist E.A."/>
            <person name="Lucas S."/>
            <person name="Salamov A.A."/>
            <person name="Bradshaw R.E."/>
            <person name="Ciuffetti L."/>
            <person name="Hamelin R.C."/>
            <person name="Kema G.H.J."/>
            <person name="Lawrence C."/>
            <person name="Scott J.A."/>
            <person name="Spatafora J.W."/>
            <person name="Turgeon B.G."/>
            <person name="de Wit P.J.G.M."/>
            <person name="Zhong S."/>
            <person name="Goodwin S.B."/>
            <person name="Grigoriev I.V."/>
        </authorList>
    </citation>
    <scope>NUCLEOTIDE SEQUENCE [LARGE SCALE GENOMIC DNA]</scope>
    <source>
        <strain>C5 / ATCC 48332 / race O</strain>
    </source>
</reference>
<reference key="2">
    <citation type="journal article" date="2013" name="PLoS Genet.">
        <title>Comparative genome structure, secondary metabolite, and effector coding capacity across Cochliobolus pathogens.</title>
        <authorList>
            <person name="Condon B.J."/>
            <person name="Leng Y."/>
            <person name="Wu D."/>
            <person name="Bushley K.E."/>
            <person name="Ohm R.A."/>
            <person name="Otillar R."/>
            <person name="Martin J."/>
            <person name="Schackwitz W."/>
            <person name="Grimwood J."/>
            <person name="MohdZainudin N."/>
            <person name="Xue C."/>
            <person name="Wang R."/>
            <person name="Manning V.A."/>
            <person name="Dhillon B."/>
            <person name="Tu Z.J."/>
            <person name="Steffenson B.J."/>
            <person name="Salamov A."/>
            <person name="Sun H."/>
            <person name="Lowry S."/>
            <person name="LaButti K."/>
            <person name="Han J."/>
            <person name="Copeland A."/>
            <person name="Lindquist E."/>
            <person name="Barry K."/>
            <person name="Schmutz J."/>
            <person name="Baker S.E."/>
            <person name="Ciuffetti L.M."/>
            <person name="Grigoriev I.V."/>
            <person name="Zhong S."/>
            <person name="Turgeon B.G."/>
        </authorList>
    </citation>
    <scope>NUCLEOTIDE SEQUENCE [LARGE SCALE GENOMIC DNA]</scope>
    <source>
        <strain>C5 / ATCC 48332 / race O</strain>
    </source>
</reference>
<reference key="3">
    <citation type="journal article" date="2017" name="Org. Lett.">
        <title>Focused genome mining of structurally related sesterterpenes: enzymatic formation of enantiomeric and diastereomeric products.</title>
        <authorList>
            <person name="Narita K."/>
            <person name="Sato H."/>
            <person name="Minami A."/>
            <person name="Kudo K."/>
            <person name="Gao L."/>
            <person name="Liu C."/>
            <person name="Ozaki T."/>
            <person name="Kodama M."/>
            <person name="Lei X."/>
            <person name="Taniguchi T."/>
            <person name="Monde K."/>
            <person name="Yamazaki M."/>
            <person name="Uchiyama M."/>
            <person name="Oikawa H."/>
        </authorList>
    </citation>
    <scope>FUNCTION</scope>
    <scope>CATALYTIC ACTIVITY</scope>
    <scope>PATHWAY</scope>
</reference>
<reference key="4">
    <citation type="journal article" date="2018" name="J. Org. Chem.">
        <title>Total biosynthesis of antiangiogenic agent (-)-terpestacin by artificial reconstitution of the biosynthetic machinery in Aspergillus oryzae.</title>
        <authorList>
            <person name="Narita K."/>
            <person name="Minami A."/>
            <person name="Ozaki T."/>
            <person name="Liu C."/>
            <person name="Kodama M."/>
            <person name="Oikawa H."/>
        </authorList>
    </citation>
    <scope>FUNCTION</scope>
    <scope>PATHWAY</scope>
</reference>
<organism>
    <name type="scientific">Cochliobolus heterostrophus (strain C5 / ATCC 48332 / race O)</name>
    <name type="common">Southern corn leaf blight fungus</name>
    <name type="synonym">Bipolaris maydis</name>
    <dbReference type="NCBI Taxonomy" id="701091"/>
    <lineage>
        <taxon>Eukaryota</taxon>
        <taxon>Fungi</taxon>
        <taxon>Dikarya</taxon>
        <taxon>Ascomycota</taxon>
        <taxon>Pezizomycotina</taxon>
        <taxon>Dothideomycetes</taxon>
        <taxon>Pleosporomycetidae</taxon>
        <taxon>Pleosporales</taxon>
        <taxon>Pleosporineae</taxon>
        <taxon>Pleosporaceae</taxon>
        <taxon>Bipolaris</taxon>
    </lineage>
</organism>
<comment type="function">
    <text evidence="7 8">Bifunctional terpene synthase; part of the gene cluster that mediates the biosynthesis of terpestacin (PubMed:29185768). The bifunctional terpene synthase tpcA converts isopentenyl diphosphate (IPP) and dimethylallyl diphosphate (DMAPP) into the sesterterpene preterpestacin I (PubMed:29185768). The C-terminal prenyltransferase (PT) domain of tpcA catalyzes formation of GFPP, whereas the N-terminal terpene cyclase (TC) domain catalyzes the cyclization of GFPP into preterpestacin I (PubMed:29185768). The cytochrome P450 monooxygenase tpcB then hydroxylates preterpestacin I to yield 24-hydroxypreterpstacin I (renamed as preterpestacin II) whereas the cytochrome P450 monooxygenase tpcC further hydroxylates preterpestacin II to yield 16,17-dihydroxypreterpestacin II (renamed as preterpestacin III) (PubMed:29417814). Finally, the FAD-dependent monooxygenase tpcD converts preterpestacin III into terpestacin (PubMed:29417814).</text>
</comment>
<comment type="catalytic activity">
    <reaction evidence="7">
        <text>isopentenyl diphosphate + (2E,6E)-farnesyl diphosphate = (2E,6E,10E)-geranylgeranyl diphosphate + diphosphate</text>
        <dbReference type="Rhea" id="RHEA:17653"/>
        <dbReference type="ChEBI" id="CHEBI:33019"/>
        <dbReference type="ChEBI" id="CHEBI:58756"/>
        <dbReference type="ChEBI" id="CHEBI:128769"/>
        <dbReference type="ChEBI" id="CHEBI:175763"/>
        <dbReference type="EC" id="2.5.1.29"/>
    </reaction>
    <physiologicalReaction direction="left-to-right" evidence="7">
        <dbReference type="Rhea" id="RHEA:17654"/>
    </physiologicalReaction>
</comment>
<comment type="catalytic activity">
    <reaction evidence="7">
        <text>isopentenyl diphosphate + (2E,6E,10E)-geranylgeranyl diphosphate = (2E,6E,10E,14E)-geranylfarnesyl diphosphate + diphosphate</text>
        <dbReference type="Rhea" id="RHEA:25694"/>
        <dbReference type="ChEBI" id="CHEBI:33019"/>
        <dbReference type="ChEBI" id="CHEBI:57907"/>
        <dbReference type="ChEBI" id="CHEBI:58756"/>
        <dbReference type="ChEBI" id="CHEBI:128769"/>
        <dbReference type="EC" id="2.5.1.81"/>
    </reaction>
    <physiologicalReaction direction="left-to-right" evidence="7">
        <dbReference type="Rhea" id="RHEA:25695"/>
    </physiologicalReaction>
</comment>
<comment type="cofactor">
    <cofactor evidence="3">
        <name>Mg(2+)</name>
        <dbReference type="ChEBI" id="CHEBI:18420"/>
    </cofactor>
</comment>
<comment type="pathway">
    <text evidence="7">Secondary metabolite biosynthesis; terpenoid biosynthesis.</text>
</comment>
<comment type="subunit">
    <text evidence="1">Hexamer.</text>
</comment>
<comment type="domain">
    <text evidence="2">The conserved DDXXD motifs as well as the NSE/DTE motif are important for the catalytic activity, presumably through binding to Mg(2+).</text>
</comment>
<comment type="similarity">
    <text evidence="11">In the N-terminal section; belongs to the terpene synthase family.</text>
</comment>
<comment type="similarity">
    <text evidence="11">In the C-terminal section; belongs to the FPP/GGPP synthase family.</text>
</comment>
<proteinExistence type="evidence at protein level"/>
<keyword id="KW-0414">Isoprene biosynthesis</keyword>
<keyword id="KW-0456">Lyase</keyword>
<keyword id="KW-0460">Magnesium</keyword>
<keyword id="KW-0479">Metal-binding</keyword>
<keyword id="KW-0511">Multifunctional enzyme</keyword>
<keyword id="KW-1185">Reference proteome</keyword>
<keyword id="KW-0677">Repeat</keyword>
<keyword id="KW-0808">Transferase</keyword>
<evidence type="ECO:0000250" key="1">
    <source>
        <dbReference type="UniProtKB" id="A2PZA5"/>
    </source>
</evidence>
<evidence type="ECO:0000250" key="2">
    <source>
        <dbReference type="UniProtKB" id="P9WEP0"/>
    </source>
</evidence>
<evidence type="ECO:0000250" key="3">
    <source>
        <dbReference type="UniProtKB" id="P9WEV7"/>
    </source>
</evidence>
<evidence type="ECO:0000250" key="4">
    <source>
        <dbReference type="UniProtKB" id="Q12051"/>
    </source>
</evidence>
<evidence type="ECO:0000250" key="5">
    <source>
        <dbReference type="UniProtKB" id="Q40577"/>
    </source>
</evidence>
<evidence type="ECO:0000256" key="6">
    <source>
        <dbReference type="SAM" id="MobiDB-lite"/>
    </source>
</evidence>
<evidence type="ECO:0000269" key="7">
    <source>
    </source>
</evidence>
<evidence type="ECO:0000269" key="8">
    <source>
    </source>
</evidence>
<evidence type="ECO:0000303" key="9">
    <source>
    </source>
</evidence>
<evidence type="ECO:0000303" key="10">
    <source>
    </source>
</evidence>
<evidence type="ECO:0000305" key="11"/>
<accession>M2U578</accession>
<gene>
    <name evidence="10" type="primary">tpcA</name>
    <name evidence="9" type="synonym">BmTS3</name>
    <name type="ORF">COCHEDRAFT_1171743</name>
</gene>
<sequence length="704" mass="79402">MEQLSYQSKLICSDESRHTGCFTTLPIRIHPRDDLADAASRRFVQDWAREMRDGREQSTHFSFSPVGNWSSLIYPEAIPERLGVLAYLSDLGLIHDDGGEGLSIEDAQAEHGELCAALDPSDISSAAPGSRAMKTKKLVSQCMLECISLDRELGLKMLAAFRDVWLAISERNSDKEAQTMEEYLKYRSDNGGMLVFWPMLQFSLGMSISEAEEALVQPIIDAATEGLLLANDYFSWEREYRELQSGQSKRIVSAVDLFIRTKGLSIDDAKEEVKRKIIAAERDFCQRRDDLYTNHPNIPLKLKRWIDCAGLAVSGNHYWCSACPRQNAWKDMSSQSLNGAKRKTSHGATIGMHEAPFKKRKDSSFFGSQPSDDEPSLSEVSSYPFYKPSGLALEAPSKYVSDMPSKGVRSTLIEALNTWLHVPSERLDSIMSVINTLHNASLILDDLEDNSPLRRGYPATHILFGHSQSINTANFMFVRAVQEVAQNLSPNALVALLEELKGLYLGQSWDLYWKHNLACPSEAEYVNMIDHKTGGMFRMLLRIMQAESDVTPQPDFHRLTLLFGRFFQIRDDYMNFQDYTAQKGLCEDLDEGKFSYPVVYCLENHPEYRGYFLSMFRQRPTIATVNACPLSGESKQYLTACLKKSGAFNKTIACLTDMERDLEFEINRLEQQTGETNPMLRLCLAKLSVKGIGRIGEVSPSTSK</sequence>
<name>TPCA_COCH5</name>